<feature type="transit peptide" description="Mitochondrion" evidence="2">
    <location>
        <begin position="1"/>
        <end position="20"/>
    </location>
</feature>
<feature type="chain" id="PRO_0000399562" description="Altered inheritance of mitochondria protein 46, mitochondrial">
    <location>
        <begin position="21"/>
        <end position="310"/>
    </location>
</feature>
<dbReference type="EMBL" id="ACFL01000147">
    <property type="protein sequence ID" value="EEU06559.1"/>
    <property type="molecule type" value="Genomic_DNA"/>
</dbReference>
<dbReference type="SMR" id="C7GRM1"/>
<dbReference type="Proteomes" id="UP000008073">
    <property type="component" value="Unassembled WGS sequence"/>
</dbReference>
<dbReference type="GO" id="GO:0005739">
    <property type="term" value="C:mitochondrion"/>
    <property type="evidence" value="ECO:0007669"/>
    <property type="project" value="UniProtKB-SubCell"/>
</dbReference>
<dbReference type="GO" id="GO:0016872">
    <property type="term" value="F:intramolecular lyase activity"/>
    <property type="evidence" value="ECO:0007669"/>
    <property type="project" value="InterPro"/>
</dbReference>
<dbReference type="Gene3D" id="3.50.70.10">
    <property type="match status" value="1"/>
</dbReference>
<dbReference type="InterPro" id="IPR016087">
    <property type="entry name" value="Chalcone_isomerase"/>
</dbReference>
<dbReference type="InterPro" id="IPR016088">
    <property type="entry name" value="Chalcone_isomerase_3-sand"/>
</dbReference>
<dbReference type="InterPro" id="IPR036298">
    <property type="entry name" value="Chalcone_isomerase_sf"/>
</dbReference>
<dbReference type="Pfam" id="PF16035">
    <property type="entry name" value="Chalcone_2"/>
    <property type="match status" value="1"/>
</dbReference>
<dbReference type="SUPFAM" id="SSF54626">
    <property type="entry name" value="Chalcone isomerase"/>
    <property type="match status" value="1"/>
</dbReference>
<protein>
    <recommendedName>
        <fullName>Altered inheritance of mitochondria protein 46, mitochondrial</fullName>
    </recommendedName>
</protein>
<reference key="1">
    <citation type="journal article" date="2009" name="Genome Res.">
        <title>Genome structure of a Saccharomyces cerevisiae strain widely used in bioethanol production.</title>
        <authorList>
            <person name="Argueso J.L."/>
            <person name="Carazzolle M.F."/>
            <person name="Mieczkowski P.A."/>
            <person name="Duarte F.M."/>
            <person name="Netto O.V.C."/>
            <person name="Missawa S.K."/>
            <person name="Galzerani F."/>
            <person name="Costa G.G.L."/>
            <person name="Vidal R.O."/>
            <person name="Noronha M.F."/>
            <person name="Dominska M."/>
            <person name="Andrietta M.G.S."/>
            <person name="Andrietta S.R."/>
            <person name="Cunha A.F."/>
            <person name="Gomes L.H."/>
            <person name="Tavares F.C.A."/>
            <person name="Alcarde A.R."/>
            <person name="Dietrich F.S."/>
            <person name="McCusker J.H."/>
            <person name="Petes T.D."/>
            <person name="Pereira G.A.G."/>
        </authorList>
    </citation>
    <scope>NUCLEOTIDE SEQUENCE [LARGE SCALE GENOMIC DNA]</scope>
    <source>
        <strain>JAY291</strain>
    </source>
</reference>
<organism>
    <name type="scientific">Saccharomyces cerevisiae (strain JAY291)</name>
    <name type="common">Baker's yeast</name>
    <dbReference type="NCBI Taxonomy" id="574961"/>
    <lineage>
        <taxon>Eukaryota</taxon>
        <taxon>Fungi</taxon>
        <taxon>Dikarya</taxon>
        <taxon>Ascomycota</taxon>
        <taxon>Saccharomycotina</taxon>
        <taxon>Saccharomycetes</taxon>
        <taxon>Saccharomycetales</taxon>
        <taxon>Saccharomycetaceae</taxon>
        <taxon>Saccharomyces</taxon>
    </lineage>
</organism>
<evidence type="ECO:0000250" key="1"/>
<evidence type="ECO:0000255" key="2"/>
<evidence type="ECO:0000305" key="3"/>
<comment type="subcellular location">
    <subcellularLocation>
        <location evidence="1">Mitochondrion</location>
    </subcellularLocation>
</comment>
<comment type="similarity">
    <text evidence="3">Belongs to the AIM18/AIM46 family.</text>
</comment>
<name>AIM46_YEAS2</name>
<proteinExistence type="inferred from homology"/>
<accession>C7GRM1</accession>
<keyword id="KW-0496">Mitochondrion</keyword>
<keyword id="KW-0809">Transit peptide</keyword>
<gene>
    <name type="primary">AIM46</name>
    <name type="synonym">FMP34</name>
    <name type="ORF">C1Q_02996</name>
</gene>
<sequence length="310" mass="34143">MRLISKVLVKTNCLEVGMRRAPQWYSHYSTTAGNARVNKKGSKVVPVLTGLALASIFAKKWYDDSQIKKADATSVAVDASISAFPKKMGPPQWPFSTQYELIGKGVRCVSSITFKAYGLGIYVAAEDKHLVSEVLDSKFLSQAFIDTAAPPSPENSHQDNLRTALNDPAKAPILINNLLDSGIRLMSKNTPIKAGSFKLLMDGTKKSVLKNPDSQSQDKDRLEAGFQELHDCFRSVKGLVARDDDFFIELNKDCSMNLSYYARKKDEFVILGTVKEPLIGKLLFAHYLAAVDPPSPEARKEVIDALVSLS</sequence>